<accession>Q963D9</accession>
<evidence type="ECO:0000250" key="1"/>
<evidence type="ECO:0000255" key="2"/>
<evidence type="ECO:0000305" key="3"/>
<protein>
    <recommendedName>
        <fullName>Penaeidin-3j</fullName>
        <shortName>Pen-3j</shortName>
    </recommendedName>
</protein>
<keyword id="KW-0027">Amidation</keyword>
<keyword id="KW-0044">Antibiotic</keyword>
<keyword id="KW-0929">Antimicrobial</keyword>
<keyword id="KW-0147">Chitin-binding</keyword>
<keyword id="KW-1015">Disulfide bond</keyword>
<keyword id="KW-0295">Fungicide</keyword>
<keyword id="KW-0873">Pyrrolidone carboxylic acid</keyword>
<keyword id="KW-0732">Signal</keyword>
<organism>
    <name type="scientific">Penaeus vannamei</name>
    <name type="common">Whiteleg shrimp</name>
    <name type="synonym">Litopenaeus vannamei</name>
    <dbReference type="NCBI Taxonomy" id="6689"/>
    <lineage>
        <taxon>Eukaryota</taxon>
        <taxon>Metazoa</taxon>
        <taxon>Ecdysozoa</taxon>
        <taxon>Arthropoda</taxon>
        <taxon>Crustacea</taxon>
        <taxon>Multicrustacea</taxon>
        <taxon>Malacostraca</taxon>
        <taxon>Eumalacostraca</taxon>
        <taxon>Eucarida</taxon>
        <taxon>Decapoda</taxon>
        <taxon>Dendrobranchiata</taxon>
        <taxon>Penaeoidea</taxon>
        <taxon>Penaeidae</taxon>
        <taxon>Penaeus</taxon>
    </lineage>
</organism>
<dbReference type="EMBL" id="AF387660">
    <property type="protein sequence ID" value="AAK73083.1"/>
    <property type="molecule type" value="mRNA"/>
</dbReference>
<dbReference type="SMR" id="Q963D9"/>
<dbReference type="GO" id="GO:0005737">
    <property type="term" value="C:cytoplasm"/>
    <property type="evidence" value="ECO:0007669"/>
    <property type="project" value="InterPro"/>
</dbReference>
<dbReference type="GO" id="GO:0008061">
    <property type="term" value="F:chitin binding"/>
    <property type="evidence" value="ECO:0007669"/>
    <property type="project" value="UniProtKB-KW"/>
</dbReference>
<dbReference type="GO" id="GO:0042742">
    <property type="term" value="P:defense response to bacterium"/>
    <property type="evidence" value="ECO:0007669"/>
    <property type="project" value="UniProtKB-KW"/>
</dbReference>
<dbReference type="GO" id="GO:0050832">
    <property type="term" value="P:defense response to fungus"/>
    <property type="evidence" value="ECO:0007669"/>
    <property type="project" value="UniProtKB-KW"/>
</dbReference>
<dbReference type="GO" id="GO:0031640">
    <property type="term" value="P:killing of cells of another organism"/>
    <property type="evidence" value="ECO:0007669"/>
    <property type="project" value="UniProtKB-KW"/>
</dbReference>
<dbReference type="InterPro" id="IPR009226">
    <property type="entry name" value="Penaeidin"/>
</dbReference>
<dbReference type="Pfam" id="PF05927">
    <property type="entry name" value="Penaeidin"/>
    <property type="match status" value="1"/>
</dbReference>
<reference key="1">
    <citation type="journal article" date="2002" name="Immunogenetics">
        <title>Diversity of the penaeidin antimicrobial peptides in two shrimp species.</title>
        <authorList>
            <person name="Cuthbertson B.J."/>
            <person name="Shepard E.F."/>
            <person name="Chapman R.W."/>
            <person name="Gross P.S."/>
        </authorList>
    </citation>
    <scope>NUCLEOTIDE SEQUENCE [MRNA]</scope>
    <source>
        <tissue>Hemocyte</tissue>
    </source>
</reference>
<sequence length="81" mass="8637">MRLVVCLVFLASFALVCQGQVYKGGYTRPVPRPPFVRPLPGGPIGPYNGCPVSCRGISFSQARSCCSRLGRCCHVGKGYSG</sequence>
<name>PEN3J_PENVA</name>
<comment type="function">
    <text evidence="1">Antibacterial and antifungal activity. Presents chitin-binding activity (By similarity).</text>
</comment>
<comment type="subcellular location">
    <subcellularLocation>
        <location>Cytoplasmic granule</location>
    </subcellularLocation>
    <text>Cytoplasmic granules of hemocytes and to a lesser extent in small granules of hemocytes.</text>
</comment>
<comment type="similarity">
    <text evidence="3">Belongs to the penaeidin family.</text>
</comment>
<feature type="signal peptide" evidence="2">
    <location>
        <begin position="1"/>
        <end position="19"/>
    </location>
</feature>
<feature type="chain" id="PRO_0000023515" description="Penaeidin-3j">
    <location>
        <begin position="20"/>
        <end position="80"/>
    </location>
</feature>
<feature type="modified residue" description="Pyrrolidone carboxylic acid" evidence="1">
    <location>
        <position position="20"/>
    </location>
</feature>
<feature type="modified residue" description="Serine amide" evidence="1">
    <location>
        <position position="80"/>
    </location>
</feature>
<feature type="disulfide bond" evidence="1">
    <location>
        <begin position="50"/>
        <end position="65"/>
    </location>
</feature>
<feature type="disulfide bond" evidence="1">
    <location>
        <begin position="54"/>
        <end position="72"/>
    </location>
</feature>
<feature type="disulfide bond" evidence="1">
    <location>
        <begin position="66"/>
        <end position="73"/>
    </location>
</feature>
<proteinExistence type="inferred from homology"/>